<feature type="chain" id="PRO_0000338704" description="3-demethoxyubiquinol 3-hydroxylase">
    <location>
        <begin position="1"/>
        <end position="209"/>
    </location>
</feature>
<feature type="binding site" evidence="1">
    <location>
        <position position="58"/>
    </location>
    <ligand>
        <name>Fe cation</name>
        <dbReference type="ChEBI" id="CHEBI:24875"/>
        <label>1</label>
    </ligand>
</feature>
<feature type="binding site" evidence="1">
    <location>
        <position position="88"/>
    </location>
    <ligand>
        <name>Fe cation</name>
        <dbReference type="ChEBI" id="CHEBI:24875"/>
        <label>1</label>
    </ligand>
</feature>
<feature type="binding site" evidence="1">
    <location>
        <position position="88"/>
    </location>
    <ligand>
        <name>Fe cation</name>
        <dbReference type="ChEBI" id="CHEBI:24875"/>
        <label>2</label>
    </ligand>
</feature>
<feature type="binding site" evidence="1">
    <location>
        <position position="91"/>
    </location>
    <ligand>
        <name>Fe cation</name>
        <dbReference type="ChEBI" id="CHEBI:24875"/>
        <label>1</label>
    </ligand>
</feature>
<feature type="binding site" evidence="1">
    <location>
        <position position="140"/>
    </location>
    <ligand>
        <name>Fe cation</name>
        <dbReference type="ChEBI" id="CHEBI:24875"/>
        <label>2</label>
    </ligand>
</feature>
<feature type="binding site" evidence="1">
    <location>
        <position position="172"/>
    </location>
    <ligand>
        <name>Fe cation</name>
        <dbReference type="ChEBI" id="CHEBI:24875"/>
        <label>1</label>
    </ligand>
</feature>
<feature type="binding site" evidence="1">
    <location>
        <position position="172"/>
    </location>
    <ligand>
        <name>Fe cation</name>
        <dbReference type="ChEBI" id="CHEBI:24875"/>
        <label>2</label>
    </ligand>
</feature>
<feature type="binding site" evidence="1">
    <location>
        <position position="175"/>
    </location>
    <ligand>
        <name>Fe cation</name>
        <dbReference type="ChEBI" id="CHEBI:24875"/>
        <label>2</label>
    </ligand>
</feature>
<comment type="function">
    <text evidence="1">Catalyzes the hydroxylation of 2-nonaprenyl-3-methyl-6-methoxy-1,4-benzoquinol during ubiquinone biosynthesis.</text>
</comment>
<comment type="catalytic activity">
    <reaction evidence="1">
        <text>a 5-methoxy-2-methyl-3-(all-trans-polyprenyl)benzene-1,4-diol + AH2 + O2 = a 3-demethylubiquinol + A + H2O</text>
        <dbReference type="Rhea" id="RHEA:50908"/>
        <dbReference type="Rhea" id="RHEA-COMP:10859"/>
        <dbReference type="Rhea" id="RHEA-COMP:10914"/>
        <dbReference type="ChEBI" id="CHEBI:13193"/>
        <dbReference type="ChEBI" id="CHEBI:15377"/>
        <dbReference type="ChEBI" id="CHEBI:15379"/>
        <dbReference type="ChEBI" id="CHEBI:17499"/>
        <dbReference type="ChEBI" id="CHEBI:84167"/>
        <dbReference type="ChEBI" id="CHEBI:84422"/>
        <dbReference type="EC" id="1.14.99.60"/>
    </reaction>
</comment>
<comment type="cofactor">
    <cofactor evidence="1">
        <name>Fe cation</name>
        <dbReference type="ChEBI" id="CHEBI:24875"/>
    </cofactor>
    <text evidence="1">Binds 2 iron ions per subunit.</text>
</comment>
<comment type="pathway">
    <text evidence="1">Cofactor biosynthesis; ubiquinone biosynthesis.</text>
</comment>
<comment type="subcellular location">
    <subcellularLocation>
        <location evidence="1">Cell membrane</location>
        <topology evidence="1">Peripheral membrane protein</topology>
    </subcellularLocation>
</comment>
<comment type="similarity">
    <text evidence="1">Belongs to the COQ7 family.</text>
</comment>
<dbReference type="EC" id="1.14.99.60" evidence="1"/>
<dbReference type="EMBL" id="CP000529">
    <property type="protein sequence ID" value="ABM35965.1"/>
    <property type="molecule type" value="Genomic_DNA"/>
</dbReference>
<dbReference type="RefSeq" id="WP_011800060.1">
    <property type="nucleotide sequence ID" value="NC_008781.1"/>
</dbReference>
<dbReference type="SMR" id="A1VJY7"/>
<dbReference type="STRING" id="365044.Pnap_0646"/>
<dbReference type="KEGG" id="pna:Pnap_0646"/>
<dbReference type="eggNOG" id="COG2941">
    <property type="taxonomic scope" value="Bacteria"/>
</dbReference>
<dbReference type="HOGENOM" id="CLU_088601_0_0_4"/>
<dbReference type="OrthoDB" id="5192789at2"/>
<dbReference type="UniPathway" id="UPA00232"/>
<dbReference type="Proteomes" id="UP000000644">
    <property type="component" value="Chromosome"/>
</dbReference>
<dbReference type="GO" id="GO:0005886">
    <property type="term" value="C:plasma membrane"/>
    <property type="evidence" value="ECO:0007669"/>
    <property type="project" value="UniProtKB-SubCell"/>
</dbReference>
<dbReference type="GO" id="GO:0008682">
    <property type="term" value="F:3-demethoxyubiquinol 3-hydroxylase activity"/>
    <property type="evidence" value="ECO:0007669"/>
    <property type="project" value="UniProtKB-EC"/>
</dbReference>
<dbReference type="GO" id="GO:0046872">
    <property type="term" value="F:metal ion binding"/>
    <property type="evidence" value="ECO:0007669"/>
    <property type="project" value="UniProtKB-KW"/>
</dbReference>
<dbReference type="GO" id="GO:0006744">
    <property type="term" value="P:ubiquinone biosynthetic process"/>
    <property type="evidence" value="ECO:0007669"/>
    <property type="project" value="UniProtKB-UniRule"/>
</dbReference>
<dbReference type="CDD" id="cd01042">
    <property type="entry name" value="DMQH"/>
    <property type="match status" value="1"/>
</dbReference>
<dbReference type="Gene3D" id="1.20.1260.10">
    <property type="match status" value="1"/>
</dbReference>
<dbReference type="HAMAP" id="MF_01658">
    <property type="entry name" value="COQ7"/>
    <property type="match status" value="1"/>
</dbReference>
<dbReference type="InterPro" id="IPR047809">
    <property type="entry name" value="COQ7_proteobact"/>
</dbReference>
<dbReference type="InterPro" id="IPR012347">
    <property type="entry name" value="Ferritin-like"/>
</dbReference>
<dbReference type="InterPro" id="IPR009078">
    <property type="entry name" value="Ferritin-like_SF"/>
</dbReference>
<dbReference type="InterPro" id="IPR011566">
    <property type="entry name" value="Ubq_synth_Coq7"/>
</dbReference>
<dbReference type="NCBIfam" id="NF033656">
    <property type="entry name" value="DMQ_monoox_COQ7"/>
    <property type="match status" value="1"/>
</dbReference>
<dbReference type="PANTHER" id="PTHR11237:SF4">
    <property type="entry name" value="5-DEMETHOXYUBIQUINONE HYDROXYLASE, MITOCHONDRIAL"/>
    <property type="match status" value="1"/>
</dbReference>
<dbReference type="PANTHER" id="PTHR11237">
    <property type="entry name" value="COENZYME Q10 BIOSYNTHESIS PROTEIN 7"/>
    <property type="match status" value="1"/>
</dbReference>
<dbReference type="Pfam" id="PF03232">
    <property type="entry name" value="COQ7"/>
    <property type="match status" value="1"/>
</dbReference>
<dbReference type="SUPFAM" id="SSF47240">
    <property type="entry name" value="Ferritin-like"/>
    <property type="match status" value="1"/>
</dbReference>
<sequence>MTTALDLALNAADGALRTLFAKPRASRTCPTVPAQATELSLEDKALSGALMRVNHVGEVCAQALYAAQALGTRDAVLRKHFLKASQEEGDHLAWTKDRLDELGARPSLLNPLWYAGAFGLGLVASRLGDRLSLGFVVETERQVEAHLASHLERLPEGDHESRAIVAQMKDDEALHASAAEDAGALQLPAPVKMLMRSAAKVMTTVAHRI</sequence>
<evidence type="ECO:0000255" key="1">
    <source>
        <dbReference type="HAMAP-Rule" id="MF_01658"/>
    </source>
</evidence>
<organism>
    <name type="scientific">Polaromonas naphthalenivorans (strain CJ2)</name>
    <dbReference type="NCBI Taxonomy" id="365044"/>
    <lineage>
        <taxon>Bacteria</taxon>
        <taxon>Pseudomonadati</taxon>
        <taxon>Pseudomonadota</taxon>
        <taxon>Betaproteobacteria</taxon>
        <taxon>Burkholderiales</taxon>
        <taxon>Comamonadaceae</taxon>
        <taxon>Polaromonas</taxon>
    </lineage>
</organism>
<gene>
    <name evidence="1" type="primary">coq7</name>
    <name type="ordered locus">Pnap_0646</name>
</gene>
<proteinExistence type="inferred from homology"/>
<protein>
    <recommendedName>
        <fullName evidence="1">3-demethoxyubiquinol 3-hydroxylase</fullName>
        <shortName evidence="1">DMQ hydroxylase</shortName>
        <ecNumber evidence="1">1.14.99.60</ecNumber>
    </recommendedName>
    <alternativeName>
        <fullName evidence="1">2-nonaprenyl-3-methyl-6-methoxy-1,4-benzoquinol hydroxylase</fullName>
    </alternativeName>
</protein>
<keyword id="KW-1003">Cell membrane</keyword>
<keyword id="KW-0408">Iron</keyword>
<keyword id="KW-0472">Membrane</keyword>
<keyword id="KW-0479">Metal-binding</keyword>
<keyword id="KW-0503">Monooxygenase</keyword>
<keyword id="KW-0560">Oxidoreductase</keyword>
<keyword id="KW-1185">Reference proteome</keyword>
<keyword id="KW-0831">Ubiquinone biosynthesis</keyword>
<accession>A1VJY7</accession>
<name>COQ7_POLNA</name>
<reference key="1">
    <citation type="journal article" date="2009" name="Environ. Microbiol.">
        <title>The genome of Polaromonas naphthalenivorans strain CJ2, isolated from coal tar-contaminated sediment, reveals physiological and metabolic versatility and evolution through extensive horizontal gene transfer.</title>
        <authorList>
            <person name="Yagi J.M."/>
            <person name="Sims D."/>
            <person name="Brettin T."/>
            <person name="Bruce D."/>
            <person name="Madsen E.L."/>
        </authorList>
    </citation>
    <scope>NUCLEOTIDE SEQUENCE [LARGE SCALE GENOMIC DNA]</scope>
    <source>
        <strain>CJ2</strain>
    </source>
</reference>